<organism>
    <name type="scientific">Saccharomyces cerevisiae (strain ATCC 204508 / S288c)</name>
    <name type="common">Baker's yeast</name>
    <dbReference type="NCBI Taxonomy" id="559292"/>
    <lineage>
        <taxon>Eukaryota</taxon>
        <taxon>Fungi</taxon>
        <taxon>Dikarya</taxon>
        <taxon>Ascomycota</taxon>
        <taxon>Saccharomycotina</taxon>
        <taxon>Saccharomycetes</taxon>
        <taxon>Saccharomycetales</taxon>
        <taxon>Saccharomycetaceae</taxon>
        <taxon>Saccharomyces</taxon>
    </lineage>
</organism>
<evidence type="ECO:0000250" key="1"/>
<evidence type="ECO:0000256" key="2">
    <source>
        <dbReference type="SAM" id="MobiDB-lite"/>
    </source>
</evidence>
<evidence type="ECO:0000269" key="3">
    <source>
    </source>
</evidence>
<evidence type="ECO:0000269" key="4">
    <source>
    </source>
</evidence>
<evidence type="ECO:0000269" key="5">
    <source>
    </source>
</evidence>
<evidence type="ECO:0000269" key="6">
    <source>
    </source>
</evidence>
<evidence type="ECO:0000269" key="7">
    <source>
    </source>
</evidence>
<evidence type="ECO:0000269" key="8">
    <source>
    </source>
</evidence>
<evidence type="ECO:0000305" key="9"/>
<feature type="chain" id="PRO_0000071952" description="DNA replication regulator SLD2">
    <location>
        <begin position="1"/>
        <end position="453"/>
    </location>
</feature>
<feature type="region of interest" description="Disordered" evidence="2">
    <location>
        <begin position="284"/>
        <end position="345"/>
    </location>
</feature>
<feature type="region of interest" description="Disordered" evidence="2">
    <location>
        <begin position="391"/>
        <end position="453"/>
    </location>
</feature>
<feature type="compositionally biased region" description="Acidic residues" evidence="2">
    <location>
        <begin position="285"/>
        <end position="301"/>
    </location>
</feature>
<feature type="compositionally biased region" description="Basic and acidic residues" evidence="2">
    <location>
        <begin position="302"/>
        <end position="327"/>
    </location>
</feature>
<feature type="compositionally biased region" description="Basic residues" evidence="2">
    <location>
        <begin position="418"/>
        <end position="427"/>
    </location>
</feature>
<feature type="compositionally biased region" description="Basic residues" evidence="2">
    <location>
        <begin position="435"/>
        <end position="453"/>
    </location>
</feature>
<feature type="modified residue" description="Phosphothreonine; by CDC28" evidence="7">
    <location>
        <position position="84"/>
    </location>
</feature>
<feature type="mutagenesis site" description="No interaction with DPB11." evidence="7">
    <original>T</original>
    <variation>A</variation>
    <location>
        <position position="84"/>
    </location>
</feature>
<feature type="mutagenesis site" description="No interaction with DPB11." evidence="7">
    <original>S</original>
    <variation>A</variation>
    <location>
        <position position="100"/>
    </location>
</feature>
<feature type="mutagenesis site" description="Normal interaction with DPB11." evidence="7">
    <original>S</original>
    <variation>A</variation>
    <location>
        <position position="208"/>
    </location>
</feature>
<feature type="mutagenesis site" description="Reduced interaction with DPB11." evidence="7">
    <original>T</original>
    <variation>A</variation>
    <location>
        <position position="241"/>
    </location>
</feature>
<protein>
    <recommendedName>
        <fullName>DNA replication regulator SLD2</fullName>
    </recommendedName>
    <alternativeName>
        <fullName>DNA replication and checkpoint protein 1</fullName>
    </alternativeName>
</protein>
<gene>
    <name type="primary">SLD2</name>
    <name type="synonym">DRC1</name>
    <name type="ordered locus">YKL108W</name>
    <name type="ORF">YKL463</name>
</gene>
<keyword id="KW-0131">Cell cycle</keyword>
<keyword id="KW-0235">DNA replication</keyword>
<keyword id="KW-0539">Nucleus</keyword>
<keyword id="KW-0597">Phosphoprotein</keyword>
<keyword id="KW-1185">Reference proteome</keyword>
<reference key="1">
    <citation type="journal article" date="1993" name="Yeast">
        <title>The DNA sequence analysis of the HAP4-LAP4 region on chromosome XI of Saccharomyces cerevisiae suggests the presence of a second aspartate aminotransferase gene in yeast.</title>
        <authorList>
            <person name="Cheret G."/>
            <person name="Pallier C."/>
            <person name="Valens M."/>
            <person name="Daignan-Fornier B."/>
            <person name="Fukuhara H."/>
            <person name="Bolotin-Fukuhara M."/>
            <person name="Sor F."/>
        </authorList>
    </citation>
    <scope>NUCLEOTIDE SEQUENCE [GENOMIC DNA]</scope>
    <source>
        <strain>ATCC 204508 / S288c</strain>
    </source>
</reference>
<reference key="2">
    <citation type="journal article" date="1994" name="Nature">
        <title>Complete DNA sequence of yeast chromosome XI.</title>
        <authorList>
            <person name="Dujon B."/>
            <person name="Alexandraki D."/>
            <person name="Andre B."/>
            <person name="Ansorge W."/>
            <person name="Baladron V."/>
            <person name="Ballesta J.P.G."/>
            <person name="Banrevi A."/>
            <person name="Bolle P.-A."/>
            <person name="Bolotin-Fukuhara M."/>
            <person name="Bossier P."/>
            <person name="Bou G."/>
            <person name="Boyer J."/>
            <person name="Buitrago M.J."/>
            <person name="Cheret G."/>
            <person name="Colleaux L."/>
            <person name="Daignan-Fornier B."/>
            <person name="del Rey F."/>
            <person name="Dion C."/>
            <person name="Domdey H."/>
            <person name="Duesterhoeft A."/>
            <person name="Duesterhus S."/>
            <person name="Entian K.-D."/>
            <person name="Erfle H."/>
            <person name="Esteban P.F."/>
            <person name="Feldmann H."/>
            <person name="Fernandes L."/>
            <person name="Fobo G.M."/>
            <person name="Fritz C."/>
            <person name="Fukuhara H."/>
            <person name="Gabel C."/>
            <person name="Gaillon L."/>
            <person name="Garcia-Cantalejo J.M."/>
            <person name="Garcia-Ramirez J.J."/>
            <person name="Gent M.E."/>
            <person name="Ghazvini M."/>
            <person name="Goffeau A."/>
            <person name="Gonzalez A."/>
            <person name="Grothues D."/>
            <person name="Guerreiro P."/>
            <person name="Hegemann J.H."/>
            <person name="Hewitt N."/>
            <person name="Hilger F."/>
            <person name="Hollenberg C.P."/>
            <person name="Horaitis O."/>
            <person name="Indge K.J."/>
            <person name="Jacquier A."/>
            <person name="James C.M."/>
            <person name="Jauniaux J.-C."/>
            <person name="Jimenez A."/>
            <person name="Keuchel H."/>
            <person name="Kirchrath L."/>
            <person name="Kleine K."/>
            <person name="Koetter P."/>
            <person name="Legrain P."/>
            <person name="Liebl S."/>
            <person name="Louis E.J."/>
            <person name="Maia e Silva A."/>
            <person name="Marck C."/>
            <person name="Monnier A.-L."/>
            <person name="Moestl D."/>
            <person name="Mueller S."/>
            <person name="Obermaier B."/>
            <person name="Oliver S.G."/>
            <person name="Pallier C."/>
            <person name="Pascolo S."/>
            <person name="Pfeiffer F."/>
            <person name="Philippsen P."/>
            <person name="Planta R.J."/>
            <person name="Pohl F.M."/>
            <person name="Pohl T.M."/>
            <person name="Poehlmann R."/>
            <person name="Portetelle D."/>
            <person name="Purnelle B."/>
            <person name="Puzos V."/>
            <person name="Ramezani Rad M."/>
            <person name="Rasmussen S.W."/>
            <person name="Remacha M.A."/>
            <person name="Revuelta J.L."/>
            <person name="Richard G.-F."/>
            <person name="Rieger M."/>
            <person name="Rodrigues-Pousada C."/>
            <person name="Rose M."/>
            <person name="Rupp T."/>
            <person name="Santos M.A."/>
            <person name="Schwager C."/>
            <person name="Sensen C."/>
            <person name="Skala J."/>
            <person name="Soares H."/>
            <person name="Sor F."/>
            <person name="Stegemann J."/>
            <person name="Tettelin H."/>
            <person name="Thierry A."/>
            <person name="Tzermia M."/>
            <person name="Urrestarazu L.A."/>
            <person name="van Dyck L."/>
            <person name="van Vliet-Reedijk J.C."/>
            <person name="Valens M."/>
            <person name="Vandenbol M."/>
            <person name="Vilela C."/>
            <person name="Vissers S."/>
            <person name="von Wettstein D."/>
            <person name="Voss H."/>
            <person name="Wiemann S."/>
            <person name="Xu G."/>
            <person name="Zimmermann J."/>
            <person name="Haasemann M."/>
            <person name="Becker I."/>
            <person name="Mewes H.-W."/>
        </authorList>
    </citation>
    <scope>NUCLEOTIDE SEQUENCE [LARGE SCALE GENOMIC DNA]</scope>
    <source>
        <strain>ATCC 204508 / S288c</strain>
    </source>
</reference>
<reference key="3">
    <citation type="journal article" date="2014" name="G3 (Bethesda)">
        <title>The reference genome sequence of Saccharomyces cerevisiae: Then and now.</title>
        <authorList>
            <person name="Engel S.R."/>
            <person name="Dietrich F.S."/>
            <person name="Fisk D.G."/>
            <person name="Binkley G."/>
            <person name="Balakrishnan R."/>
            <person name="Costanzo M.C."/>
            <person name="Dwight S.S."/>
            <person name="Hitz B.C."/>
            <person name="Karra K."/>
            <person name="Nash R.S."/>
            <person name="Weng S."/>
            <person name="Wong E.D."/>
            <person name="Lloyd P."/>
            <person name="Skrzypek M.S."/>
            <person name="Miyasato S.R."/>
            <person name="Simison M."/>
            <person name="Cherry J.M."/>
        </authorList>
    </citation>
    <scope>GENOME REANNOTATION</scope>
    <source>
        <strain>ATCC 204508 / S288c</strain>
    </source>
</reference>
<reference key="4">
    <citation type="journal article" date="1998" name="Mol. Cell. Biol.">
        <title>Sld2, which interacts with Dpb11 in Saccharomyces cerevisiae, is required for chromosomal DNA replication.</title>
        <authorList>
            <person name="Kamimura Y."/>
            <person name="Masumoto H."/>
            <person name="Sugino A."/>
            <person name="Araki H."/>
        </authorList>
    </citation>
    <scope>FUNCTION</scope>
    <scope>INTERACTION WITH DPB11</scope>
</reference>
<reference key="5">
    <citation type="journal article" date="1999" name="Proc. Natl. Acad. Sci. U.S.A.">
        <title>DRC1, DNA replication and checkpoint protein 1, functions with DPB11 to control DNA replication and the S-phase checkpoint in Saccharomyces cerevisiae.</title>
        <authorList>
            <person name="Wang H."/>
            <person name="Elledge S.J."/>
        </authorList>
    </citation>
    <scope>FUNCTION</scope>
    <scope>INTERACTION WITH DPB11</scope>
</reference>
<reference key="6">
    <citation type="journal article" date="2002" name="Nature">
        <title>S-Cdk-dependent phosphorylation of Sld2 essential for chromosomal DNA replication in budding yeast.</title>
        <authorList>
            <person name="Masumoto H."/>
            <person name="Muramatsu S."/>
            <person name="Kamimura Y."/>
            <person name="Araki H."/>
        </authorList>
    </citation>
    <scope>FUNCTION</scope>
    <scope>PHOSPHORYLATION BY CDC28</scope>
</reference>
<reference key="7">
    <citation type="journal article" date="2003" name="Nature">
        <title>Global analysis of protein expression in yeast.</title>
        <authorList>
            <person name="Ghaemmaghami S."/>
            <person name="Huh W.-K."/>
            <person name="Bower K."/>
            <person name="Howson R.W."/>
            <person name="Belle A."/>
            <person name="Dephoure N."/>
            <person name="O'Shea E.K."/>
            <person name="Weissman J.S."/>
        </authorList>
    </citation>
    <scope>LEVEL OF PROTEIN EXPRESSION [LARGE SCALE ANALYSIS]</scope>
</reference>
<reference key="8">
    <citation type="journal article" date="2003" name="Nature">
        <title>Targets of the cyclin-dependent kinase Cdk1.</title>
        <authorList>
            <person name="Ubersax J.A."/>
            <person name="Woodbury E.L."/>
            <person name="Quang P.N."/>
            <person name="Paraz M."/>
            <person name="Blethrow J.D."/>
            <person name="Shah K."/>
            <person name="Shokat K.M."/>
            <person name="Morgan D.O."/>
        </authorList>
    </citation>
    <scope>PHOSPHORYLATION BY CDC28</scope>
</reference>
<reference key="9">
    <citation type="journal article" date="2006" name="EMBO J.">
        <title>A CDK-catalysed regulatory phosphorylation for formation of the DNA replication complex Sld2-Dpb11.</title>
        <authorList>
            <person name="Tak Y.-S."/>
            <person name="Tanaka Y."/>
            <person name="Endo S."/>
            <person name="Kamimura Y."/>
            <person name="Araki H."/>
        </authorList>
    </citation>
    <scope>INTERACTION WITH DPB11</scope>
    <scope>PHOSPHORYLATION AT THR-84</scope>
    <scope>MUTAGENESIS OF THR-84; SER-100; SER-208 AND THR-241</scope>
</reference>
<reference key="10">
    <citation type="journal article" date="2007" name="Mol. Cell. Biol.">
        <title>Novel role for Cdc14 sequestration: Cdc14 dephosphorylates factors that promote DNA replication.</title>
        <authorList>
            <person name="Bloom J."/>
            <person name="Cross F.R."/>
        </authorList>
    </citation>
    <scope>DEPHOSPHORYLATION BY CDC14</scope>
</reference>
<proteinExistence type="evidence at protein level"/>
<name>SLD2_YEAST</name>
<dbReference type="EMBL" id="X71133">
    <property type="protein sequence ID" value="CAA50449.1"/>
    <property type="molecule type" value="Genomic_DNA"/>
</dbReference>
<dbReference type="EMBL" id="Z28108">
    <property type="protein sequence ID" value="CAA81948.1"/>
    <property type="molecule type" value="Genomic_DNA"/>
</dbReference>
<dbReference type="EMBL" id="BK006944">
    <property type="protein sequence ID" value="DAA09049.1"/>
    <property type="molecule type" value="Genomic_DNA"/>
</dbReference>
<dbReference type="PIR" id="S37935">
    <property type="entry name" value="S37935"/>
</dbReference>
<dbReference type="RefSeq" id="NP_012814.1">
    <property type="nucleotide sequence ID" value="NM_001179674.1"/>
</dbReference>
<dbReference type="SMR" id="P34252"/>
<dbReference type="BioGRID" id="34025">
    <property type="interactions" value="59"/>
</dbReference>
<dbReference type="ComplexPortal" id="CPX-1188">
    <property type="entry name" value="DPB11-SLD3-SLD2 DNA replication complex"/>
</dbReference>
<dbReference type="DIP" id="DIP-5880N"/>
<dbReference type="FunCoup" id="P34252">
    <property type="interactions" value="75"/>
</dbReference>
<dbReference type="IntAct" id="P34252">
    <property type="interactions" value="21"/>
</dbReference>
<dbReference type="MINT" id="P34252"/>
<dbReference type="STRING" id="4932.YKL108W"/>
<dbReference type="GlyGen" id="P34252">
    <property type="glycosylation" value="1 site"/>
</dbReference>
<dbReference type="iPTMnet" id="P34252"/>
<dbReference type="PaxDb" id="4932-YKL108W"/>
<dbReference type="PeptideAtlas" id="P34252"/>
<dbReference type="EnsemblFungi" id="YKL108W_mRNA">
    <property type="protein sequence ID" value="YKL108W"/>
    <property type="gene ID" value="YKL108W"/>
</dbReference>
<dbReference type="GeneID" id="853752"/>
<dbReference type="KEGG" id="sce:YKL108W"/>
<dbReference type="AGR" id="SGD:S000001591"/>
<dbReference type="SGD" id="S000001591">
    <property type="gene designation" value="SLD2"/>
</dbReference>
<dbReference type="VEuPathDB" id="FungiDB:YKL108W"/>
<dbReference type="eggNOG" id="ENOG502SCF7">
    <property type="taxonomic scope" value="Eukaryota"/>
</dbReference>
<dbReference type="HOGENOM" id="CLU_057728_0_0_1"/>
<dbReference type="InParanoid" id="P34252"/>
<dbReference type="OMA" id="TWEHDFI"/>
<dbReference type="OrthoDB" id="8775810at2759"/>
<dbReference type="BioCyc" id="YEAST:G3O-31894-MONOMER"/>
<dbReference type="BioGRID-ORCS" id="853752">
    <property type="hits" value="0 hits in 10 CRISPR screens"/>
</dbReference>
<dbReference type="PRO" id="PR:P34252"/>
<dbReference type="Proteomes" id="UP000002311">
    <property type="component" value="Chromosome XI"/>
</dbReference>
<dbReference type="RNAct" id="P34252">
    <property type="molecule type" value="protein"/>
</dbReference>
<dbReference type="GO" id="GO:0005737">
    <property type="term" value="C:cytoplasm"/>
    <property type="evidence" value="ECO:0007005"/>
    <property type="project" value="SGD"/>
</dbReference>
<dbReference type="GO" id="GO:0031261">
    <property type="term" value="C:DNA replication preinitiation complex"/>
    <property type="evidence" value="ECO:0000314"/>
    <property type="project" value="SGD"/>
</dbReference>
<dbReference type="GO" id="GO:0005634">
    <property type="term" value="C:nucleus"/>
    <property type="evidence" value="ECO:0007005"/>
    <property type="project" value="SGD"/>
</dbReference>
<dbReference type="GO" id="GO:0003688">
    <property type="term" value="F:DNA replication origin binding"/>
    <property type="evidence" value="ECO:0000314"/>
    <property type="project" value="SGD"/>
</dbReference>
<dbReference type="GO" id="GO:0003697">
    <property type="term" value="F:single-stranded DNA binding"/>
    <property type="evidence" value="ECO:0000314"/>
    <property type="project" value="SGD"/>
</dbReference>
<dbReference type="GO" id="GO:0006270">
    <property type="term" value="P:DNA replication initiation"/>
    <property type="evidence" value="ECO:0000316"/>
    <property type="project" value="SGD"/>
</dbReference>
<dbReference type="GO" id="GO:0071163">
    <property type="term" value="P:DNA replication preinitiation complex assembly"/>
    <property type="evidence" value="ECO:0000315"/>
    <property type="project" value="SGD"/>
</dbReference>
<dbReference type="GO" id="GO:0000727">
    <property type="term" value="P:double-strand break repair via break-induced replication"/>
    <property type="evidence" value="ECO:0000315"/>
    <property type="project" value="SGD"/>
</dbReference>
<dbReference type="GO" id="GO:0033314">
    <property type="term" value="P:mitotic DNA replication checkpoint signaling"/>
    <property type="evidence" value="ECO:0000315"/>
    <property type="project" value="SGD"/>
</dbReference>
<dbReference type="GO" id="GO:1902977">
    <property type="term" value="P:mitotic DNA replication preinitiation complex assembly"/>
    <property type="evidence" value="ECO:0000318"/>
    <property type="project" value="GO_Central"/>
</dbReference>
<dbReference type="GO" id="GO:0031333">
    <property type="term" value="P:negative regulation of protein-containing complex assembly"/>
    <property type="evidence" value="ECO:0000315"/>
    <property type="project" value="SGD"/>
</dbReference>
<dbReference type="GO" id="GO:1903466">
    <property type="term" value="P:regulation of mitotic DNA replication initiation"/>
    <property type="evidence" value="ECO:0000303"/>
    <property type="project" value="ComplexPortal"/>
</dbReference>
<dbReference type="CDD" id="cd22289">
    <property type="entry name" value="RecQL4_SLD2_NTD"/>
    <property type="match status" value="1"/>
</dbReference>
<dbReference type="FunFam" id="1.10.10.1460:FF:000001">
    <property type="entry name" value="DNA replication regulator Sld2"/>
    <property type="match status" value="1"/>
</dbReference>
<dbReference type="Gene3D" id="1.10.10.1460">
    <property type="match status" value="1"/>
</dbReference>
<dbReference type="InterPro" id="IPR021110">
    <property type="entry name" value="DNA_rep_checkpnt_protein"/>
</dbReference>
<dbReference type="InterPro" id="IPR040203">
    <property type="entry name" value="Sld2"/>
</dbReference>
<dbReference type="PANTHER" id="PTHR28124">
    <property type="entry name" value="DNA REPLICATION REGULATOR SLD2"/>
    <property type="match status" value="1"/>
</dbReference>
<dbReference type="PANTHER" id="PTHR28124:SF1">
    <property type="entry name" value="DNA REPLICATION REGULATOR SLD2"/>
    <property type="match status" value="1"/>
</dbReference>
<dbReference type="Pfam" id="PF11719">
    <property type="entry name" value="Drc1-Sld2"/>
    <property type="match status" value="1"/>
</dbReference>
<accession>P34252</accession>
<accession>D6VXH9</accession>
<comment type="function">
    <text evidence="3 4 8">Has a role in the initiation of DNA replication. Required at S-phase checkpoint. Also required for the proper activation of RAD53 in response to DNA damage and replication blocks.</text>
</comment>
<comment type="subunit">
    <text evidence="3 7 8">Interacts with DPB11.</text>
</comment>
<comment type="interaction">
    <interactant intactId="EBI-26824">
        <id>P34252</id>
    </interactant>
    <interactant intactId="EBI-25984">
        <id>P47027</id>
        <label>DPB11</label>
    </interactant>
    <organismsDiffer>false</organismsDiffer>
    <experiments>9</experiments>
</comment>
<comment type="subcellular location">
    <subcellularLocation>
        <location evidence="1">Nucleus</location>
    </subcellularLocation>
</comment>
<comment type="PTM">
    <text evidence="4 6 7">Phosphorylated by CDC28 at the onset of S-phase. This phosphorylation, specifically phosphorylation of Thr-84 promotes interaction with DPB11 leading to DNA replication. Dephosphorylated by CDC14.</text>
</comment>
<comment type="miscellaneous">
    <text evidence="5">Present with 656 molecules/cell in log phase SD medium.</text>
</comment>
<comment type="similarity">
    <text evidence="9">Belongs to the SLD2 family.</text>
</comment>
<sequence>MYSFELDKLKIELKTWEHDFIDKNKREPTRDDIKSLRTVRQMYKQYSTLKKKQSLQRQKVDTQESVELPAHKKDHDEVVEIGPTPQVYGKAISIFDMNLSPIKPIYMTFTNNIDVNNDNSKTISNESSPRKTILLKSSPADRTLVAEPISSVKRQLNFQMLNASSTRTPTSSPCKNRNGKLVEIKKCSPTINPPLESGKPSGYYGPNSPLKLDEENIHLNISLNSSTKRRLQIAYPSLQKTPSKDQADISTSFSPSPLIRRPLTKSLIELAREHTEIVKEFGVLQEEDIEEEEEGEEGENGYDEKNHEDDFGLEDELIRPKVVKDIFQEDDDNDDSQAREDTFIRKRPKRRKVIRRLRDNDPETETAGFERDVHKELVKLKRRKVAEFLGSTSQISDTEFEHDPEASSGVVSSEQKPTAKRKGRKKYNLVSNNFRRLKLPKKNRFSNGRWGRR</sequence>